<gene>
    <name evidence="7" type="primary">cmasb</name>
    <name evidence="3" type="synonym">cmas2</name>
</gene>
<comment type="function">
    <text evidence="2">Catalyzes the activation of 2-keto-3-deoxy-D-glycero-D-galacto-nononic acid (KDN) to cytidine 5'-monophosphate 2-keto-3-deoxy-D-glycero-D-galacto-nononic acid (CMP-KDN), a substrate required for the addition of sialic acid. Also has weak activity towards N-acetylneuraminic acid (NeuNAc) and N-glycolylneuraminic acid (Neu5Gc).</text>
</comment>
<comment type="catalytic activity">
    <reaction evidence="2">
        <text>an N-acylneuraminate + CTP = a CMP-N-acyl-beta-neuraminate + diphosphate</text>
        <dbReference type="Rhea" id="RHEA:11344"/>
        <dbReference type="ChEBI" id="CHEBI:33019"/>
        <dbReference type="ChEBI" id="CHEBI:37563"/>
        <dbReference type="ChEBI" id="CHEBI:60073"/>
        <dbReference type="ChEBI" id="CHEBI:68671"/>
        <dbReference type="EC" id="2.7.7.43"/>
    </reaction>
</comment>
<comment type="pathway">
    <text evidence="2">Amino-sugar metabolism; N-acetylneuraminate metabolism.</text>
</comment>
<comment type="subunit">
    <text evidence="2">Homotetramer.</text>
</comment>
<comment type="subcellular location">
    <subcellularLocation>
        <location evidence="2">Cytoplasm</location>
    </subcellularLocation>
</comment>
<comment type="developmental stage">
    <text evidence="2">During early stages of development (9-18 hours post fertilization, hpf) has weak and ubiquitous expression. Expression is restricted to brain at 24 hpf. At the hatching stage (48 hpf), detected in heart but not in brain.</text>
</comment>
<comment type="similarity">
    <text evidence="4">Belongs to the CMP-NeuNAc synthase family.</text>
</comment>
<accession>H9BFW7</accession>
<accession>E7F0X7</accession>
<organism evidence="6">
    <name type="scientific">Danio rerio</name>
    <name type="common">Zebrafish</name>
    <name type="synonym">Brachydanio rerio</name>
    <dbReference type="NCBI Taxonomy" id="7955"/>
    <lineage>
        <taxon>Eukaryota</taxon>
        <taxon>Metazoa</taxon>
        <taxon>Chordata</taxon>
        <taxon>Craniata</taxon>
        <taxon>Vertebrata</taxon>
        <taxon>Euteleostomi</taxon>
        <taxon>Actinopterygii</taxon>
        <taxon>Neopterygii</taxon>
        <taxon>Teleostei</taxon>
        <taxon>Ostariophysi</taxon>
        <taxon>Cypriniformes</taxon>
        <taxon>Danionidae</taxon>
        <taxon>Danioninae</taxon>
        <taxon>Danio</taxon>
    </lineage>
</organism>
<name>NEUAB_DANRE</name>
<dbReference type="EC" id="2.7.7.43" evidence="2"/>
<dbReference type="EMBL" id="JQ015187">
    <property type="protein sequence ID" value="AFC17881.1"/>
    <property type="molecule type" value="mRNA"/>
</dbReference>
<dbReference type="EMBL" id="CABZ01039863">
    <property type="status" value="NOT_ANNOTATED_CDS"/>
    <property type="molecule type" value="Genomic_DNA"/>
</dbReference>
<dbReference type="RefSeq" id="NP_001245338.1">
    <property type="nucleotide sequence ID" value="NM_001258409.1"/>
</dbReference>
<dbReference type="SMR" id="H9BFW7"/>
<dbReference type="FunCoup" id="H9BFW7">
    <property type="interactions" value="60"/>
</dbReference>
<dbReference type="STRING" id="7955.ENSDARP00000107758"/>
<dbReference type="PaxDb" id="7955-ENSDARP00000107758"/>
<dbReference type="GeneID" id="100885772"/>
<dbReference type="KEGG" id="dre:100885772"/>
<dbReference type="AGR" id="ZFIN:ZDB-GENE-120427-1"/>
<dbReference type="CTD" id="100885772"/>
<dbReference type="ZFIN" id="ZDB-GENE-120427-1">
    <property type="gene designation" value="cmasb"/>
</dbReference>
<dbReference type="eggNOG" id="ENOG502QQH3">
    <property type="taxonomic scope" value="Eukaryota"/>
</dbReference>
<dbReference type="InParanoid" id="H9BFW7"/>
<dbReference type="OrthoDB" id="10262032at2759"/>
<dbReference type="BRENDA" id="2.7.7.43">
    <property type="organism ID" value="928"/>
</dbReference>
<dbReference type="UniPathway" id="UPA00628"/>
<dbReference type="PRO" id="PR:H9BFW7"/>
<dbReference type="Proteomes" id="UP000000437">
    <property type="component" value="Chromosome 25"/>
</dbReference>
<dbReference type="GO" id="GO:0005737">
    <property type="term" value="C:cytoplasm"/>
    <property type="evidence" value="ECO:0000314"/>
    <property type="project" value="ZFIN"/>
</dbReference>
<dbReference type="GO" id="GO:0008781">
    <property type="term" value="F:N-acylneuraminate cytidylyltransferase activity"/>
    <property type="evidence" value="ECO:0000314"/>
    <property type="project" value="ZFIN"/>
</dbReference>
<dbReference type="GO" id="GO:0006054">
    <property type="term" value="P:N-acetylneuraminate metabolic process"/>
    <property type="evidence" value="ECO:0007669"/>
    <property type="project" value="UniProtKB-UniPathway"/>
</dbReference>
<dbReference type="CDD" id="cd02513">
    <property type="entry name" value="CMP-NeuAc_Synthase"/>
    <property type="match status" value="1"/>
</dbReference>
<dbReference type="FunFam" id="3.40.50.1000:FF:000082">
    <property type="entry name" value="N-acylneuraminate cytidylyltransferase A"/>
    <property type="match status" value="1"/>
</dbReference>
<dbReference type="FunFam" id="3.90.550.10:FF:000074">
    <property type="entry name" value="N-acylneuraminate cytidylyltransferase A"/>
    <property type="match status" value="1"/>
</dbReference>
<dbReference type="Gene3D" id="3.40.50.1000">
    <property type="entry name" value="HAD superfamily/HAD-like"/>
    <property type="match status" value="1"/>
</dbReference>
<dbReference type="Gene3D" id="3.90.550.10">
    <property type="entry name" value="Spore Coat Polysaccharide Biosynthesis Protein SpsA, Chain A"/>
    <property type="match status" value="1"/>
</dbReference>
<dbReference type="InterPro" id="IPR050793">
    <property type="entry name" value="CMP-NeuNAc_synthase"/>
</dbReference>
<dbReference type="InterPro" id="IPR003329">
    <property type="entry name" value="Cytidylyl_trans"/>
</dbReference>
<dbReference type="InterPro" id="IPR036412">
    <property type="entry name" value="HAD-like_sf"/>
</dbReference>
<dbReference type="InterPro" id="IPR023214">
    <property type="entry name" value="HAD_sf"/>
</dbReference>
<dbReference type="InterPro" id="IPR029044">
    <property type="entry name" value="Nucleotide-diphossugar_trans"/>
</dbReference>
<dbReference type="PANTHER" id="PTHR21485">
    <property type="entry name" value="HAD SUPERFAMILY MEMBERS CMAS AND KDSC"/>
    <property type="match status" value="1"/>
</dbReference>
<dbReference type="PANTHER" id="PTHR21485:SF3">
    <property type="entry name" value="N-ACYLNEURAMINATE CYTIDYLYLTRANSFERASE"/>
    <property type="match status" value="1"/>
</dbReference>
<dbReference type="Pfam" id="PF02348">
    <property type="entry name" value="CTP_transf_3"/>
    <property type="match status" value="1"/>
</dbReference>
<dbReference type="SUPFAM" id="SSF56784">
    <property type="entry name" value="HAD-like"/>
    <property type="match status" value="1"/>
</dbReference>
<dbReference type="SUPFAM" id="SSF53448">
    <property type="entry name" value="Nucleotide-diphospho-sugar transferases"/>
    <property type="match status" value="1"/>
</dbReference>
<feature type="chain" id="PRO_0000438686" description="N-acylneuraminate cytidylyltransferase B">
    <location>
        <begin position="1"/>
        <end position="423"/>
    </location>
</feature>
<feature type="active site" evidence="1">
    <location>
        <position position="178"/>
    </location>
</feature>
<feature type="binding site" evidence="1">
    <location>
        <position position="30"/>
    </location>
    <ligand>
        <name>substrate</name>
    </ligand>
</feature>
<feature type="binding site" evidence="1">
    <location>
        <position position="40"/>
    </location>
    <ligand>
        <name>substrate</name>
    </ligand>
</feature>
<feature type="binding site" evidence="1">
    <location>
        <position position="88"/>
    </location>
    <ligand>
        <name>substrate</name>
    </ligand>
</feature>
<feature type="binding site" evidence="1">
    <location>
        <position position="97"/>
    </location>
    <ligand>
        <name>substrate</name>
    </ligand>
</feature>
<feature type="binding site" evidence="1">
    <location>
        <position position="99"/>
    </location>
    <ligand>
        <name>substrate</name>
    </ligand>
</feature>
<feature type="binding site" evidence="1">
    <location>
        <position position="120"/>
    </location>
    <ligand>
        <name>substrate</name>
    </ligand>
</feature>
<feature type="mutagenesis site" description="Abolishes catalytic activity." evidence="2">
    <location>
        <begin position="179"/>
        <end position="181"/>
    </location>
</feature>
<sequence length="423" mass="47665">MEGGRCAQVSSVPASPSSGHRHRAALILARGGSKGIPLKNIKNLAGVPLIGWVLRAALDSDVDSVWVSTDHDEIERVAKLWGAKVHRRSPEVSKDSSSSLETIQEFIRLRPEVDVICHIQATSPCLHPHHINEALQKITHQGFSYVLSVVRRHQFRWEELQENEDRNPKSFNINVAQRPRRQDWPGELYENGSFYFSTRKAWESGLTELGRIAYYEMPPEFSVDIDVDIDWPVAEQRVLRFGYFGREENAAVRLFLCKVSGCLTNGQIYMSVSGEDLVTINARDVAGIQMLQKENIEVILISSVNEPLSRGVLEKVSQRAGCGLSFTEQRNALEMQKLMDKRKLHWDQVAFMGSESEDVEIMSQAGLNGVPSDAPVAELIAAKYTCQRAGGHGAVREFAEYILSMKRKSSREENHERIDKHNF</sequence>
<proteinExistence type="evidence at protein level"/>
<evidence type="ECO:0000250" key="1">
    <source>
        <dbReference type="UniProtKB" id="Q99KK2"/>
    </source>
</evidence>
<evidence type="ECO:0000269" key="2">
    <source>
    </source>
</evidence>
<evidence type="ECO:0000303" key="3">
    <source>
    </source>
</evidence>
<evidence type="ECO:0000305" key="4"/>
<evidence type="ECO:0000305" key="5">
    <source>
    </source>
</evidence>
<evidence type="ECO:0000312" key="6">
    <source>
        <dbReference type="EMBL" id="AFC17881.1"/>
    </source>
</evidence>
<evidence type="ECO:0000312" key="7">
    <source>
        <dbReference type="ZFIN" id="ZDB-GENE-120427-1"/>
    </source>
</evidence>
<keyword id="KW-0963">Cytoplasm</keyword>
<keyword id="KW-0548">Nucleotidyltransferase</keyword>
<keyword id="KW-1185">Reference proteome</keyword>
<keyword id="KW-0808">Transferase</keyword>
<protein>
    <recommendedName>
        <fullName evidence="5">N-acylneuraminate cytidylyltransferase B</fullName>
        <ecNumber evidence="2">2.7.7.43</ecNumber>
    </recommendedName>
    <alternativeName>
        <fullName evidence="3">CMP-sialic acid synthetase 2</fullName>
    </alternativeName>
</protein>
<reference evidence="6" key="1">
    <citation type="journal article" date="2012" name="J. Biol. Chem.">
        <title>Identification and biochemical characterization of two functional CMP-sialic acid synthetases in Danio rerio.</title>
        <authorList>
            <person name="Schaper W."/>
            <person name="Bentrop J."/>
            <person name="Ustinova J."/>
            <person name="Blume L."/>
            <person name="Kats E."/>
            <person name="Tiralongo J."/>
            <person name="Weinhold B."/>
            <person name="Bastmeyer M."/>
            <person name="Munster-Kuhnel A.K."/>
        </authorList>
    </citation>
    <scope>NUCLEOTIDE SEQUENCE [MRNA]</scope>
    <scope>CATALYTIC ACTIVITY</scope>
    <scope>PATHWAY</scope>
    <scope>SUBUNIT</scope>
    <scope>SUBCELLULAR LOCATION</scope>
    <scope>DEVELOPMENTAL STAGE</scope>
    <scope>MUTAGENESIS OF 179-PRO--ARG-182</scope>
</reference>
<reference key="2">
    <citation type="journal article" date="2013" name="Nature">
        <title>The zebrafish reference genome sequence and its relationship to the human genome.</title>
        <authorList>
            <person name="Howe K."/>
            <person name="Clark M.D."/>
            <person name="Torroja C.F."/>
            <person name="Torrance J."/>
            <person name="Berthelot C."/>
            <person name="Muffato M."/>
            <person name="Collins J.E."/>
            <person name="Humphray S."/>
            <person name="McLaren K."/>
            <person name="Matthews L."/>
            <person name="McLaren S."/>
            <person name="Sealy I."/>
            <person name="Caccamo M."/>
            <person name="Churcher C."/>
            <person name="Scott C."/>
            <person name="Barrett J.C."/>
            <person name="Koch R."/>
            <person name="Rauch G.J."/>
            <person name="White S."/>
            <person name="Chow W."/>
            <person name="Kilian B."/>
            <person name="Quintais L.T."/>
            <person name="Guerra-Assuncao J.A."/>
            <person name="Zhou Y."/>
            <person name="Gu Y."/>
            <person name="Yen J."/>
            <person name="Vogel J.H."/>
            <person name="Eyre T."/>
            <person name="Redmond S."/>
            <person name="Banerjee R."/>
            <person name="Chi J."/>
            <person name="Fu B."/>
            <person name="Langley E."/>
            <person name="Maguire S.F."/>
            <person name="Laird G.K."/>
            <person name="Lloyd D."/>
            <person name="Kenyon E."/>
            <person name="Donaldson S."/>
            <person name="Sehra H."/>
            <person name="Almeida-King J."/>
            <person name="Loveland J."/>
            <person name="Trevanion S."/>
            <person name="Jones M."/>
            <person name="Quail M."/>
            <person name="Willey D."/>
            <person name="Hunt A."/>
            <person name="Burton J."/>
            <person name="Sims S."/>
            <person name="McLay K."/>
            <person name="Plumb B."/>
            <person name="Davis J."/>
            <person name="Clee C."/>
            <person name="Oliver K."/>
            <person name="Clark R."/>
            <person name="Riddle C."/>
            <person name="Elliot D."/>
            <person name="Threadgold G."/>
            <person name="Harden G."/>
            <person name="Ware D."/>
            <person name="Begum S."/>
            <person name="Mortimore B."/>
            <person name="Kerry G."/>
            <person name="Heath P."/>
            <person name="Phillimore B."/>
            <person name="Tracey A."/>
            <person name="Corby N."/>
            <person name="Dunn M."/>
            <person name="Johnson C."/>
            <person name="Wood J."/>
            <person name="Clark S."/>
            <person name="Pelan S."/>
            <person name="Griffiths G."/>
            <person name="Smith M."/>
            <person name="Glithero R."/>
            <person name="Howden P."/>
            <person name="Barker N."/>
            <person name="Lloyd C."/>
            <person name="Stevens C."/>
            <person name="Harley J."/>
            <person name="Holt K."/>
            <person name="Panagiotidis G."/>
            <person name="Lovell J."/>
            <person name="Beasley H."/>
            <person name="Henderson C."/>
            <person name="Gordon D."/>
            <person name="Auger K."/>
            <person name="Wright D."/>
            <person name="Collins J."/>
            <person name="Raisen C."/>
            <person name="Dyer L."/>
            <person name="Leung K."/>
            <person name="Robertson L."/>
            <person name="Ambridge K."/>
            <person name="Leongamornlert D."/>
            <person name="McGuire S."/>
            <person name="Gilderthorp R."/>
            <person name="Griffiths C."/>
            <person name="Manthravadi D."/>
            <person name="Nichol S."/>
            <person name="Barker G."/>
            <person name="Whitehead S."/>
            <person name="Kay M."/>
            <person name="Brown J."/>
            <person name="Murnane C."/>
            <person name="Gray E."/>
            <person name="Humphries M."/>
            <person name="Sycamore N."/>
            <person name="Barker D."/>
            <person name="Saunders D."/>
            <person name="Wallis J."/>
            <person name="Babbage A."/>
            <person name="Hammond S."/>
            <person name="Mashreghi-Mohammadi M."/>
            <person name="Barr L."/>
            <person name="Martin S."/>
            <person name="Wray P."/>
            <person name="Ellington A."/>
            <person name="Matthews N."/>
            <person name="Ellwood M."/>
            <person name="Woodmansey R."/>
            <person name="Clark G."/>
            <person name="Cooper J."/>
            <person name="Tromans A."/>
            <person name="Grafham D."/>
            <person name="Skuce C."/>
            <person name="Pandian R."/>
            <person name="Andrews R."/>
            <person name="Harrison E."/>
            <person name="Kimberley A."/>
            <person name="Garnett J."/>
            <person name="Fosker N."/>
            <person name="Hall R."/>
            <person name="Garner P."/>
            <person name="Kelly D."/>
            <person name="Bird C."/>
            <person name="Palmer S."/>
            <person name="Gehring I."/>
            <person name="Berger A."/>
            <person name="Dooley C.M."/>
            <person name="Ersan-Urun Z."/>
            <person name="Eser C."/>
            <person name="Geiger H."/>
            <person name="Geisler M."/>
            <person name="Karotki L."/>
            <person name="Kirn A."/>
            <person name="Konantz J."/>
            <person name="Konantz M."/>
            <person name="Oberlander M."/>
            <person name="Rudolph-Geiger S."/>
            <person name="Teucke M."/>
            <person name="Lanz C."/>
            <person name="Raddatz G."/>
            <person name="Osoegawa K."/>
            <person name="Zhu B."/>
            <person name="Rapp A."/>
            <person name="Widaa S."/>
            <person name="Langford C."/>
            <person name="Yang F."/>
            <person name="Schuster S.C."/>
            <person name="Carter N.P."/>
            <person name="Harrow J."/>
            <person name="Ning Z."/>
            <person name="Herrero J."/>
            <person name="Searle S.M."/>
            <person name="Enright A."/>
            <person name="Geisler R."/>
            <person name="Plasterk R.H."/>
            <person name="Lee C."/>
            <person name="Westerfield M."/>
            <person name="de Jong P.J."/>
            <person name="Zon L.I."/>
            <person name="Postlethwait J.H."/>
            <person name="Nusslein-Volhard C."/>
            <person name="Hubbard T.J."/>
            <person name="Roest Crollius H."/>
            <person name="Rogers J."/>
            <person name="Stemple D.L."/>
        </authorList>
    </citation>
    <scope>NUCLEOTIDE SEQUENCE [LARGE SCALE GENOMIC DNA]</scope>
    <source>
        <strain>Tuebingen</strain>
    </source>
</reference>